<name>RL1_COXB2</name>
<sequence length="232" mass="24695">MAAKLTKKRKTLAEKVQRDKAYPLSEAIKLIKECAKAKFNESIDVAINLGIDSRKSDQAIRGATVLPHGSGRTVKVAVFAQGDNVEKAKAAGADIVGLDDLAERIQGGDIDFDVVIATPETMRVVGKLGQVLGPRGLMPNPKVGTVTTDVASAVKNAKQGQVRYRTDKNGIIHCTIGKVNFEEKALEENFLALLNDIKKAKPSAAKGTYLKKLTLSSTMGPGIAIDRTTVGA</sequence>
<proteinExistence type="inferred from homology"/>
<accession>B6J274</accession>
<organism>
    <name type="scientific">Coxiella burnetii (strain CbuG_Q212)</name>
    <name type="common">Coxiella burnetii (strain Q212)</name>
    <dbReference type="NCBI Taxonomy" id="434923"/>
    <lineage>
        <taxon>Bacteria</taxon>
        <taxon>Pseudomonadati</taxon>
        <taxon>Pseudomonadota</taxon>
        <taxon>Gammaproteobacteria</taxon>
        <taxon>Legionellales</taxon>
        <taxon>Coxiellaceae</taxon>
        <taxon>Coxiella</taxon>
    </lineage>
</organism>
<reference key="1">
    <citation type="journal article" date="2009" name="Infect. Immun.">
        <title>Comparative genomics reveal extensive transposon-mediated genomic plasticity and diversity among potential effector proteins within the genus Coxiella.</title>
        <authorList>
            <person name="Beare P.A."/>
            <person name="Unsworth N."/>
            <person name="Andoh M."/>
            <person name="Voth D.E."/>
            <person name="Omsland A."/>
            <person name="Gilk S.D."/>
            <person name="Williams K.P."/>
            <person name="Sobral B.W."/>
            <person name="Kupko J.J. III"/>
            <person name="Porcella S.F."/>
            <person name="Samuel J.E."/>
            <person name="Heinzen R.A."/>
        </authorList>
    </citation>
    <scope>NUCLEOTIDE SEQUENCE [LARGE SCALE GENOMIC DNA]</scope>
    <source>
        <strain>CbuG_Q212</strain>
    </source>
</reference>
<keyword id="KW-0678">Repressor</keyword>
<keyword id="KW-0687">Ribonucleoprotein</keyword>
<keyword id="KW-0689">Ribosomal protein</keyword>
<keyword id="KW-0694">RNA-binding</keyword>
<keyword id="KW-0699">rRNA-binding</keyword>
<keyword id="KW-0810">Translation regulation</keyword>
<keyword id="KW-0820">tRNA-binding</keyword>
<feature type="chain" id="PRO_1000141385" description="Large ribosomal subunit protein uL1">
    <location>
        <begin position="1"/>
        <end position="232"/>
    </location>
</feature>
<protein>
    <recommendedName>
        <fullName evidence="1">Large ribosomal subunit protein uL1</fullName>
    </recommendedName>
    <alternativeName>
        <fullName evidence="2">50S ribosomal protein L1</fullName>
    </alternativeName>
</protein>
<gene>
    <name evidence="1" type="primary">rplA</name>
    <name type="ordered locus">CbuG_1778</name>
</gene>
<dbReference type="EMBL" id="CP001019">
    <property type="protein sequence ID" value="ACJ19052.1"/>
    <property type="molecule type" value="Genomic_DNA"/>
</dbReference>
<dbReference type="RefSeq" id="WP_005771615.1">
    <property type="nucleotide sequence ID" value="NC_011527.1"/>
</dbReference>
<dbReference type="SMR" id="B6J274"/>
<dbReference type="KEGG" id="cbg:CbuG_1778"/>
<dbReference type="HOGENOM" id="CLU_062853_0_0_6"/>
<dbReference type="GO" id="GO:0022625">
    <property type="term" value="C:cytosolic large ribosomal subunit"/>
    <property type="evidence" value="ECO:0007669"/>
    <property type="project" value="TreeGrafter"/>
</dbReference>
<dbReference type="GO" id="GO:0019843">
    <property type="term" value="F:rRNA binding"/>
    <property type="evidence" value="ECO:0007669"/>
    <property type="project" value="UniProtKB-UniRule"/>
</dbReference>
<dbReference type="GO" id="GO:0003735">
    <property type="term" value="F:structural constituent of ribosome"/>
    <property type="evidence" value="ECO:0007669"/>
    <property type="project" value="InterPro"/>
</dbReference>
<dbReference type="GO" id="GO:0000049">
    <property type="term" value="F:tRNA binding"/>
    <property type="evidence" value="ECO:0007669"/>
    <property type="project" value="UniProtKB-KW"/>
</dbReference>
<dbReference type="GO" id="GO:0006417">
    <property type="term" value="P:regulation of translation"/>
    <property type="evidence" value="ECO:0007669"/>
    <property type="project" value="UniProtKB-KW"/>
</dbReference>
<dbReference type="GO" id="GO:0006412">
    <property type="term" value="P:translation"/>
    <property type="evidence" value="ECO:0007669"/>
    <property type="project" value="UniProtKB-UniRule"/>
</dbReference>
<dbReference type="CDD" id="cd00403">
    <property type="entry name" value="Ribosomal_L1"/>
    <property type="match status" value="1"/>
</dbReference>
<dbReference type="FunFam" id="3.40.50.790:FF:000001">
    <property type="entry name" value="50S ribosomal protein L1"/>
    <property type="match status" value="1"/>
</dbReference>
<dbReference type="Gene3D" id="3.30.190.20">
    <property type="match status" value="1"/>
</dbReference>
<dbReference type="Gene3D" id="3.40.50.790">
    <property type="match status" value="1"/>
</dbReference>
<dbReference type="HAMAP" id="MF_01318_B">
    <property type="entry name" value="Ribosomal_uL1_B"/>
    <property type="match status" value="1"/>
</dbReference>
<dbReference type="InterPro" id="IPR005878">
    <property type="entry name" value="Ribosom_uL1_bac-type"/>
</dbReference>
<dbReference type="InterPro" id="IPR002143">
    <property type="entry name" value="Ribosomal_uL1"/>
</dbReference>
<dbReference type="InterPro" id="IPR023674">
    <property type="entry name" value="Ribosomal_uL1-like"/>
</dbReference>
<dbReference type="InterPro" id="IPR028364">
    <property type="entry name" value="Ribosomal_uL1/biogenesis"/>
</dbReference>
<dbReference type="InterPro" id="IPR016095">
    <property type="entry name" value="Ribosomal_uL1_3-a/b-sand"/>
</dbReference>
<dbReference type="InterPro" id="IPR023673">
    <property type="entry name" value="Ribosomal_uL1_CS"/>
</dbReference>
<dbReference type="NCBIfam" id="TIGR01169">
    <property type="entry name" value="rplA_bact"/>
    <property type="match status" value="1"/>
</dbReference>
<dbReference type="PANTHER" id="PTHR36427">
    <property type="entry name" value="54S RIBOSOMAL PROTEIN L1, MITOCHONDRIAL"/>
    <property type="match status" value="1"/>
</dbReference>
<dbReference type="PANTHER" id="PTHR36427:SF3">
    <property type="entry name" value="LARGE RIBOSOMAL SUBUNIT PROTEIN UL1M"/>
    <property type="match status" value="1"/>
</dbReference>
<dbReference type="Pfam" id="PF00687">
    <property type="entry name" value="Ribosomal_L1"/>
    <property type="match status" value="1"/>
</dbReference>
<dbReference type="PIRSF" id="PIRSF002155">
    <property type="entry name" value="Ribosomal_L1"/>
    <property type="match status" value="1"/>
</dbReference>
<dbReference type="SUPFAM" id="SSF56808">
    <property type="entry name" value="Ribosomal protein L1"/>
    <property type="match status" value="1"/>
</dbReference>
<dbReference type="PROSITE" id="PS01199">
    <property type="entry name" value="RIBOSOMAL_L1"/>
    <property type="match status" value="1"/>
</dbReference>
<comment type="function">
    <text evidence="1">Binds directly to 23S rRNA. The L1 stalk is quite mobile in the ribosome, and is involved in E site tRNA release.</text>
</comment>
<comment type="function">
    <text evidence="1">Protein L1 is also a translational repressor protein, it controls the translation of the L11 operon by binding to its mRNA.</text>
</comment>
<comment type="subunit">
    <text evidence="1">Part of the 50S ribosomal subunit.</text>
</comment>
<comment type="similarity">
    <text evidence="1">Belongs to the universal ribosomal protein uL1 family.</text>
</comment>
<evidence type="ECO:0000255" key="1">
    <source>
        <dbReference type="HAMAP-Rule" id="MF_01318"/>
    </source>
</evidence>
<evidence type="ECO:0000305" key="2"/>